<keyword id="KW-0227">DNA damage</keyword>
<keyword id="KW-0234">DNA repair</keyword>
<keyword id="KW-0235">DNA replication</keyword>
<keyword id="KW-0436">Ligase</keyword>
<keyword id="KW-0520">NAD</keyword>
<keyword id="KW-1185">Reference proteome</keyword>
<proteinExistence type="inferred from homology"/>
<dbReference type="EC" id="6.5.1.2" evidence="1"/>
<dbReference type="EMBL" id="CP000800">
    <property type="protein sequence ID" value="ABV20629.1"/>
    <property type="status" value="ALT_INIT"/>
    <property type="molecule type" value="Genomic_DNA"/>
</dbReference>
<dbReference type="RefSeq" id="WP_000870053.1">
    <property type="nucleotide sequence ID" value="NC_009801.1"/>
</dbReference>
<dbReference type="SMR" id="A7ZTJ9"/>
<dbReference type="KEGG" id="ecw:EcE24377A_4148"/>
<dbReference type="HOGENOM" id="CLU_489786_0_0_6"/>
<dbReference type="Proteomes" id="UP000001122">
    <property type="component" value="Chromosome"/>
</dbReference>
<dbReference type="GO" id="GO:0003911">
    <property type="term" value="F:DNA ligase (NAD+) activity"/>
    <property type="evidence" value="ECO:0007669"/>
    <property type="project" value="UniProtKB-UniRule"/>
</dbReference>
<dbReference type="GO" id="GO:0006281">
    <property type="term" value="P:DNA repair"/>
    <property type="evidence" value="ECO:0007669"/>
    <property type="project" value="UniProtKB-KW"/>
</dbReference>
<dbReference type="GO" id="GO:0006260">
    <property type="term" value="P:DNA replication"/>
    <property type="evidence" value="ECO:0007669"/>
    <property type="project" value="UniProtKB-KW"/>
</dbReference>
<dbReference type="FunFam" id="1.10.287.610:FF:000003">
    <property type="entry name" value="DNA ligase B"/>
    <property type="match status" value="1"/>
</dbReference>
<dbReference type="FunFam" id="2.40.50.140:FF:000139">
    <property type="entry name" value="DNA ligase B"/>
    <property type="match status" value="1"/>
</dbReference>
<dbReference type="FunFam" id="3.30.470.30:FF:000007">
    <property type="entry name" value="DNA ligase B"/>
    <property type="match status" value="1"/>
</dbReference>
<dbReference type="Gene3D" id="3.30.470.30">
    <property type="entry name" value="DNA ligase/mRNA capping enzyme"/>
    <property type="match status" value="1"/>
</dbReference>
<dbReference type="Gene3D" id="1.10.287.610">
    <property type="entry name" value="Helix hairpin bin"/>
    <property type="match status" value="1"/>
</dbReference>
<dbReference type="Gene3D" id="2.40.50.140">
    <property type="entry name" value="Nucleic acid-binding proteins"/>
    <property type="match status" value="1"/>
</dbReference>
<dbReference type="HAMAP" id="MF_01587">
    <property type="entry name" value="DNA_ligase_B"/>
    <property type="match status" value="1"/>
</dbReference>
<dbReference type="InterPro" id="IPR018239">
    <property type="entry name" value="DNA_ligase_AS"/>
</dbReference>
<dbReference type="InterPro" id="IPR020923">
    <property type="entry name" value="DNA_ligase_B"/>
</dbReference>
<dbReference type="InterPro" id="IPR033136">
    <property type="entry name" value="DNA_ligase_CS"/>
</dbReference>
<dbReference type="InterPro" id="IPR013839">
    <property type="entry name" value="DNAligase_adenylation"/>
</dbReference>
<dbReference type="InterPro" id="IPR013840">
    <property type="entry name" value="DNAligase_N"/>
</dbReference>
<dbReference type="InterPro" id="IPR012340">
    <property type="entry name" value="NA-bd_OB-fold"/>
</dbReference>
<dbReference type="InterPro" id="IPR050326">
    <property type="entry name" value="NAD_dep_DNA_ligaseB"/>
</dbReference>
<dbReference type="InterPro" id="IPR004150">
    <property type="entry name" value="NAD_DNA_ligase_OB"/>
</dbReference>
<dbReference type="InterPro" id="IPR010994">
    <property type="entry name" value="RuvA_2-like"/>
</dbReference>
<dbReference type="NCBIfam" id="NF005987">
    <property type="entry name" value="PRK08097.1"/>
    <property type="match status" value="1"/>
</dbReference>
<dbReference type="PANTHER" id="PTHR47810">
    <property type="entry name" value="DNA LIGASE"/>
    <property type="match status" value="1"/>
</dbReference>
<dbReference type="PANTHER" id="PTHR47810:SF1">
    <property type="entry name" value="DNA LIGASE B"/>
    <property type="match status" value="1"/>
</dbReference>
<dbReference type="Pfam" id="PF01653">
    <property type="entry name" value="DNA_ligase_aden"/>
    <property type="match status" value="1"/>
</dbReference>
<dbReference type="Pfam" id="PF03120">
    <property type="entry name" value="DNA_ligase_OB"/>
    <property type="match status" value="1"/>
</dbReference>
<dbReference type="SMART" id="SM00532">
    <property type="entry name" value="LIGANc"/>
    <property type="match status" value="1"/>
</dbReference>
<dbReference type="SUPFAM" id="SSF56091">
    <property type="entry name" value="DNA ligase/mRNA capping enzyme, catalytic domain"/>
    <property type="match status" value="1"/>
</dbReference>
<dbReference type="SUPFAM" id="SSF50249">
    <property type="entry name" value="Nucleic acid-binding proteins"/>
    <property type="match status" value="1"/>
</dbReference>
<dbReference type="SUPFAM" id="SSF47781">
    <property type="entry name" value="RuvA domain 2-like"/>
    <property type="match status" value="1"/>
</dbReference>
<dbReference type="PROSITE" id="PS01055">
    <property type="entry name" value="DNA_LIGASE_N1"/>
    <property type="match status" value="1"/>
</dbReference>
<dbReference type="PROSITE" id="PS01056">
    <property type="entry name" value="DNA_LIGASE_N2"/>
    <property type="match status" value="1"/>
</dbReference>
<reference key="1">
    <citation type="journal article" date="2008" name="J. Bacteriol.">
        <title>The pangenome structure of Escherichia coli: comparative genomic analysis of E. coli commensal and pathogenic isolates.</title>
        <authorList>
            <person name="Rasko D.A."/>
            <person name="Rosovitz M.J."/>
            <person name="Myers G.S.A."/>
            <person name="Mongodin E.F."/>
            <person name="Fricke W.F."/>
            <person name="Gajer P."/>
            <person name="Crabtree J."/>
            <person name="Sebaihia M."/>
            <person name="Thomson N.R."/>
            <person name="Chaudhuri R."/>
            <person name="Henderson I.R."/>
            <person name="Sperandio V."/>
            <person name="Ravel J."/>
        </authorList>
    </citation>
    <scope>NUCLEOTIDE SEQUENCE [LARGE SCALE GENOMIC DNA]</scope>
    <source>
        <strain>E24377A / ETEC</strain>
    </source>
</reference>
<comment type="function">
    <text evidence="1">Catalyzes the formation of phosphodiester linkages between 5'-phosphoryl and 3'-hydroxyl groups in double-stranded DNA using NAD as a coenzyme and as the energy source for the reaction.</text>
</comment>
<comment type="catalytic activity">
    <reaction evidence="1">
        <text>NAD(+) + (deoxyribonucleotide)n-3'-hydroxyl + 5'-phospho-(deoxyribonucleotide)m = (deoxyribonucleotide)n+m + AMP + beta-nicotinamide D-nucleotide.</text>
        <dbReference type="EC" id="6.5.1.2"/>
    </reaction>
</comment>
<comment type="similarity">
    <text evidence="1">Belongs to the NAD-dependent DNA ligase family. LigB subfamily.</text>
</comment>
<comment type="sequence caution" evidence="2">
    <conflict type="erroneous initiation">
        <sequence resource="EMBL-CDS" id="ABV20629"/>
    </conflict>
</comment>
<gene>
    <name evidence="1" type="primary">ligB</name>
    <name type="ordered locus">EcE24377A_4148</name>
</gene>
<protein>
    <recommendedName>
        <fullName evidence="1">DNA ligase B</fullName>
        <ecNumber evidence="1">6.5.1.2</ecNumber>
    </recommendedName>
    <alternativeName>
        <fullName evidence="1">Polydeoxyribonucleotide synthase [NAD(+)] B</fullName>
    </alternativeName>
</protein>
<accession>A7ZTJ9</accession>
<feature type="chain" id="PRO_0000318797" description="DNA ligase B">
    <location>
        <begin position="1"/>
        <end position="560"/>
    </location>
</feature>
<feature type="active site" description="N6-AMP-lysine intermediate" evidence="1">
    <location>
        <position position="124"/>
    </location>
</feature>
<name>LIGB_ECO24</name>
<sequence>MKVWMAILISILCWQSSVWAVCPAWSPARAQEEISRLQQQIKQWDDDYWKEGKSEVEDGVYDQLSARLTQWQRCFGSEPRDVMMPPLNGAVMHPVAHTGVRKMVDKNALSLWMRERSDLWVQPKVDGVAVTLVYRDGKLNKAISRGNGLKGEDWTQKVSLISAVPQTVSGPLANSTLQGEIFLQREGHIQQQMGGINARAKVAGLMMRQDDSDTLNSLGVFVWAWPDGPQLMTDRLKELATAGFTLTQRYTRAVKNADEVARVRNEWWKAKLPFVTDGVVVRGAKEPESRHWLPGQAEWLVAWKYQPVAQVAEVKAIQFAVGKSGKISVVASLAPVMLDDKKVQRVNIGSVRRWQEWDIAPGDQILVSLAGQGIPRIDDVVWRGAERTKPTPPENRFNSLTCYFASDVCQEQFISRLVWLGSKQVLGLDGIGEAGWRALHQTHRFEHIFSWLLLTPEQLQNTPGIAKSKSAQLWHRFNLARKQPFTRWVMAMGIPLTRAALNASDERSWSQLLFSTEQFWQQLPGTGSGRARQVIEWKENAQIKKLGSWLAAQQITGFEP</sequence>
<organism>
    <name type="scientific">Escherichia coli O139:H28 (strain E24377A / ETEC)</name>
    <dbReference type="NCBI Taxonomy" id="331111"/>
    <lineage>
        <taxon>Bacteria</taxon>
        <taxon>Pseudomonadati</taxon>
        <taxon>Pseudomonadota</taxon>
        <taxon>Gammaproteobacteria</taxon>
        <taxon>Enterobacterales</taxon>
        <taxon>Enterobacteriaceae</taxon>
        <taxon>Escherichia</taxon>
    </lineage>
</organism>
<evidence type="ECO:0000255" key="1">
    <source>
        <dbReference type="HAMAP-Rule" id="MF_01587"/>
    </source>
</evidence>
<evidence type="ECO:0000305" key="2"/>